<accession>O94491</accession>
<dbReference type="EMBL" id="CU329672">
    <property type="protein sequence ID" value="CAA22656.1"/>
    <property type="molecule type" value="Genomic_DNA"/>
</dbReference>
<dbReference type="PIR" id="T41345">
    <property type="entry name" value="T41345"/>
</dbReference>
<dbReference type="SMR" id="O94491"/>
<dbReference type="BioGRID" id="275984">
    <property type="interactions" value="1"/>
</dbReference>
<dbReference type="FunCoup" id="O94491">
    <property type="interactions" value="68"/>
</dbReference>
<dbReference type="STRING" id="284812.O94491"/>
<dbReference type="iPTMnet" id="O94491"/>
<dbReference type="SwissPalm" id="O94491"/>
<dbReference type="PaxDb" id="4896-SPCC417.10.1"/>
<dbReference type="EnsemblFungi" id="SPCC417.10.1">
    <property type="protein sequence ID" value="SPCC417.10.1:pep"/>
    <property type="gene ID" value="SPCC417.10"/>
</dbReference>
<dbReference type="KEGG" id="spo:2539419"/>
<dbReference type="PomBase" id="SPCC417.10"/>
<dbReference type="VEuPathDB" id="FungiDB:SPCC417.10"/>
<dbReference type="eggNOG" id="KOG2533">
    <property type="taxonomic scope" value="Eukaryota"/>
</dbReference>
<dbReference type="HOGENOM" id="CLU_001265_0_5_1"/>
<dbReference type="InParanoid" id="O94491"/>
<dbReference type="OMA" id="RKIDMYM"/>
<dbReference type="PhylomeDB" id="O94491"/>
<dbReference type="PRO" id="PR:O94491"/>
<dbReference type="Proteomes" id="UP000002485">
    <property type="component" value="Chromosome III"/>
</dbReference>
<dbReference type="GO" id="GO:0032153">
    <property type="term" value="C:cell division site"/>
    <property type="evidence" value="ECO:0007005"/>
    <property type="project" value="PomBase"/>
</dbReference>
<dbReference type="GO" id="GO:0051286">
    <property type="term" value="C:cell tip"/>
    <property type="evidence" value="ECO:0007005"/>
    <property type="project" value="PomBase"/>
</dbReference>
<dbReference type="GO" id="GO:0005783">
    <property type="term" value="C:endoplasmic reticulum"/>
    <property type="evidence" value="ECO:0007005"/>
    <property type="project" value="PomBase"/>
</dbReference>
<dbReference type="GO" id="GO:0005794">
    <property type="term" value="C:Golgi apparatus"/>
    <property type="evidence" value="ECO:0007005"/>
    <property type="project" value="PomBase"/>
</dbReference>
<dbReference type="GO" id="GO:0016020">
    <property type="term" value="C:membrane"/>
    <property type="evidence" value="ECO:0000318"/>
    <property type="project" value="GO_Central"/>
</dbReference>
<dbReference type="GO" id="GO:0071916">
    <property type="term" value="F:dipeptide transmembrane transporter activity"/>
    <property type="evidence" value="ECO:0000255"/>
    <property type="project" value="PomBase"/>
</dbReference>
<dbReference type="GO" id="GO:0022857">
    <property type="term" value="F:transmembrane transporter activity"/>
    <property type="evidence" value="ECO:0000318"/>
    <property type="project" value="GO_Central"/>
</dbReference>
<dbReference type="GO" id="GO:0035442">
    <property type="term" value="P:dipeptide transmembrane transport"/>
    <property type="evidence" value="ECO:0000255"/>
    <property type="project" value="PomBase"/>
</dbReference>
<dbReference type="CDD" id="cd17327">
    <property type="entry name" value="MFS_FEN2_like"/>
    <property type="match status" value="1"/>
</dbReference>
<dbReference type="FunFam" id="1.20.1250.20:FF:000064">
    <property type="entry name" value="MFS allantoate transporter"/>
    <property type="match status" value="1"/>
</dbReference>
<dbReference type="Gene3D" id="1.20.1250.20">
    <property type="entry name" value="MFS general substrate transporter like domains"/>
    <property type="match status" value="2"/>
</dbReference>
<dbReference type="InterPro" id="IPR011701">
    <property type="entry name" value="MFS"/>
</dbReference>
<dbReference type="InterPro" id="IPR036259">
    <property type="entry name" value="MFS_trans_sf"/>
</dbReference>
<dbReference type="NCBIfam" id="TIGR00893">
    <property type="entry name" value="2A0114"/>
    <property type="match status" value="1"/>
</dbReference>
<dbReference type="PANTHER" id="PTHR43791:SF1">
    <property type="entry name" value="ALLANTOATE PERMEASE"/>
    <property type="match status" value="1"/>
</dbReference>
<dbReference type="PANTHER" id="PTHR43791">
    <property type="entry name" value="PERMEASE-RELATED"/>
    <property type="match status" value="1"/>
</dbReference>
<dbReference type="Pfam" id="PF07690">
    <property type="entry name" value="MFS_1"/>
    <property type="match status" value="1"/>
</dbReference>
<dbReference type="SUPFAM" id="SSF103473">
    <property type="entry name" value="MFS general substrate transporter"/>
    <property type="match status" value="1"/>
</dbReference>
<evidence type="ECO:0000255" key="1"/>
<evidence type="ECO:0000269" key="2">
    <source>
    </source>
</evidence>
<evidence type="ECO:0000305" key="3"/>
<evidence type="ECO:0000312" key="4">
    <source>
        <dbReference type="EMBL" id="CAA22656.1"/>
    </source>
</evidence>
<gene>
    <name type="ORF">SPCC417.10</name>
</gene>
<keyword id="KW-0256">Endoplasmic reticulum</keyword>
<keyword id="KW-0333">Golgi apparatus</keyword>
<keyword id="KW-0472">Membrane</keyword>
<keyword id="KW-1185">Reference proteome</keyword>
<keyword id="KW-0812">Transmembrane</keyword>
<keyword id="KW-1133">Transmembrane helix</keyword>
<keyword id="KW-0813">Transport</keyword>
<comment type="subcellular location">
    <subcellularLocation>
        <location evidence="2">Endoplasmic reticulum</location>
    </subcellularLocation>
    <subcellularLocation>
        <location evidence="2">Golgi apparatus</location>
    </subcellularLocation>
    <subcellularLocation>
        <location evidence="1">Membrane</location>
        <topology evidence="1">Multi-pass membrane protein</topology>
    </subcellularLocation>
    <text evidence="1 2">Barrier septum. Cell tip.</text>
</comment>
<comment type="similarity">
    <text evidence="1">Belongs to the major facilitator superfamily. Allantoate permease family.</text>
</comment>
<organism>
    <name type="scientific">Schizosaccharomyces pombe (strain 972 / ATCC 24843)</name>
    <name type="common">Fission yeast</name>
    <dbReference type="NCBI Taxonomy" id="284812"/>
    <lineage>
        <taxon>Eukaryota</taxon>
        <taxon>Fungi</taxon>
        <taxon>Dikarya</taxon>
        <taxon>Ascomycota</taxon>
        <taxon>Taphrinomycotina</taxon>
        <taxon>Schizosaccharomycetes</taxon>
        <taxon>Schizosaccharomycetales</taxon>
        <taxon>Schizosaccharomycetaceae</taxon>
        <taxon>Schizosaccharomyces</taxon>
    </lineage>
</organism>
<sequence length="508" mass="56665">MSSISIDEKLKDPESVQNKEILDVDVGDLSPKGVDAAFNYALDVDYDEIDPETERRLVRKIDCTIFPVMCLVYCIQFLDKTSNSYAVIMGLKEDLKMEGQMYSWSGTAFYLGYLVFEFPASLLLQRFPLSKTLCVFLVIWGFLLCMTSVANYPGFIALRVLLGMMESAASPGFILLTAQWYKRSEQQLRTSVWVAFNGLGQILGSCMAYGLAKRTSLPMRGWKLIFIICGVLAIFLGFVILAVVPDNPFKAWFLTEEDRKLVVKRLRANKQGVGNNHFKLYQFKETMLDIRTWIMFVSSVLLNIPNGGIGTFSSLLIKGTMGYDTLQTLLMGLPAGACEFGGLIAFGFLSLFIHKRMVLATITTCIALIGSCLLSFAGPPRAQLAGYYLLMVSPGAMIVMFAIISSNASGYTKKVTVGVIYLIGYCVGNLIGPQTFKAADAPEYMPAKNTMVGCYAATLVTFPALYYVNWRENKRRDQLAAEGKIEHRPNAEFEDLTDFENLDFRYTL</sequence>
<name>YC7A_SCHPO</name>
<reference evidence="4" key="1">
    <citation type="journal article" date="2002" name="Nature">
        <title>The genome sequence of Schizosaccharomyces pombe.</title>
        <authorList>
            <person name="Wood V."/>
            <person name="Gwilliam R."/>
            <person name="Rajandream M.A."/>
            <person name="Lyne M.H."/>
            <person name="Lyne R."/>
            <person name="Stewart A."/>
            <person name="Sgouros J.G."/>
            <person name="Peat N."/>
            <person name="Hayles J."/>
            <person name="Baker S.G."/>
            <person name="Basham D."/>
            <person name="Bowman S."/>
            <person name="Brooks K."/>
            <person name="Brown D."/>
            <person name="Brown S."/>
            <person name="Chillingworth T."/>
            <person name="Churcher C.M."/>
            <person name="Collins M."/>
            <person name="Connor R."/>
            <person name="Cronin A."/>
            <person name="Davis P."/>
            <person name="Feltwell T."/>
            <person name="Fraser A."/>
            <person name="Gentles S."/>
            <person name="Goble A."/>
            <person name="Hamlin N."/>
            <person name="Harris D.E."/>
            <person name="Hidalgo J."/>
            <person name="Hodgson G."/>
            <person name="Holroyd S."/>
            <person name="Hornsby T."/>
            <person name="Howarth S."/>
            <person name="Huckle E.J."/>
            <person name="Hunt S."/>
            <person name="Jagels K."/>
            <person name="James K.D."/>
            <person name="Jones L."/>
            <person name="Jones M."/>
            <person name="Leather S."/>
            <person name="McDonald S."/>
            <person name="McLean J."/>
            <person name="Mooney P."/>
            <person name="Moule S."/>
            <person name="Mungall K.L."/>
            <person name="Murphy L.D."/>
            <person name="Niblett D."/>
            <person name="Odell C."/>
            <person name="Oliver K."/>
            <person name="O'Neil S."/>
            <person name="Pearson D."/>
            <person name="Quail M.A."/>
            <person name="Rabbinowitsch E."/>
            <person name="Rutherford K.M."/>
            <person name="Rutter S."/>
            <person name="Saunders D."/>
            <person name="Seeger K."/>
            <person name="Sharp S."/>
            <person name="Skelton J."/>
            <person name="Simmonds M.N."/>
            <person name="Squares R."/>
            <person name="Squares S."/>
            <person name="Stevens K."/>
            <person name="Taylor K."/>
            <person name="Taylor R.G."/>
            <person name="Tivey A."/>
            <person name="Walsh S.V."/>
            <person name="Warren T."/>
            <person name="Whitehead S."/>
            <person name="Woodward J.R."/>
            <person name="Volckaert G."/>
            <person name="Aert R."/>
            <person name="Robben J."/>
            <person name="Grymonprez B."/>
            <person name="Weltjens I."/>
            <person name="Vanstreels E."/>
            <person name="Rieger M."/>
            <person name="Schaefer M."/>
            <person name="Mueller-Auer S."/>
            <person name="Gabel C."/>
            <person name="Fuchs M."/>
            <person name="Duesterhoeft A."/>
            <person name="Fritzc C."/>
            <person name="Holzer E."/>
            <person name="Moestl D."/>
            <person name="Hilbert H."/>
            <person name="Borzym K."/>
            <person name="Langer I."/>
            <person name="Beck A."/>
            <person name="Lehrach H."/>
            <person name="Reinhardt R."/>
            <person name="Pohl T.M."/>
            <person name="Eger P."/>
            <person name="Zimmermann W."/>
            <person name="Wedler H."/>
            <person name="Wambutt R."/>
            <person name="Purnelle B."/>
            <person name="Goffeau A."/>
            <person name="Cadieu E."/>
            <person name="Dreano S."/>
            <person name="Gloux S."/>
            <person name="Lelaure V."/>
            <person name="Mottier S."/>
            <person name="Galibert F."/>
            <person name="Aves S.J."/>
            <person name="Xiang Z."/>
            <person name="Hunt C."/>
            <person name="Moore K."/>
            <person name="Hurst S.M."/>
            <person name="Lucas M."/>
            <person name="Rochet M."/>
            <person name="Gaillardin C."/>
            <person name="Tallada V.A."/>
            <person name="Garzon A."/>
            <person name="Thode G."/>
            <person name="Daga R.R."/>
            <person name="Cruzado L."/>
            <person name="Jimenez J."/>
            <person name="Sanchez M."/>
            <person name="del Rey F."/>
            <person name="Benito J."/>
            <person name="Dominguez A."/>
            <person name="Revuelta J.L."/>
            <person name="Moreno S."/>
            <person name="Armstrong J."/>
            <person name="Forsburg S.L."/>
            <person name="Cerutti L."/>
            <person name="Lowe T."/>
            <person name="McCombie W.R."/>
            <person name="Paulsen I."/>
            <person name="Potashkin J."/>
            <person name="Shpakovski G.V."/>
            <person name="Ussery D."/>
            <person name="Barrell B.G."/>
            <person name="Nurse P."/>
        </authorList>
    </citation>
    <scope>NUCLEOTIDE SEQUENCE [LARGE SCALE GENOMIC DNA]</scope>
    <source>
        <strain>972 / ATCC 24843</strain>
    </source>
</reference>
<reference evidence="3" key="2">
    <citation type="journal article" date="2006" name="Nat. Biotechnol.">
        <title>ORFeome cloning and global analysis of protein localization in the fission yeast Schizosaccharomyces pombe.</title>
        <authorList>
            <person name="Matsuyama A."/>
            <person name="Arai R."/>
            <person name="Yashiroda Y."/>
            <person name="Shirai A."/>
            <person name="Kamata A."/>
            <person name="Sekido S."/>
            <person name="Kobayashi Y."/>
            <person name="Hashimoto A."/>
            <person name="Hamamoto M."/>
            <person name="Hiraoka Y."/>
            <person name="Horinouchi S."/>
            <person name="Yoshida M."/>
        </authorList>
    </citation>
    <scope>SUBCELLULAR LOCATION [LARGE SCALE ANALYSIS]</scope>
</reference>
<proteinExistence type="inferred from homology"/>
<feature type="chain" id="PRO_0000372783" description="Uncharacterized transporter C417.10">
    <location>
        <begin position="1"/>
        <end position="508"/>
    </location>
</feature>
<feature type="transmembrane region" description="Helical" evidence="1">
    <location>
        <begin position="65"/>
        <end position="87"/>
    </location>
</feature>
<feature type="transmembrane region" description="Helical" evidence="1">
    <location>
        <begin position="104"/>
        <end position="124"/>
    </location>
</feature>
<feature type="transmembrane region" description="Helical" evidence="1">
    <location>
        <begin position="136"/>
        <end position="156"/>
    </location>
</feature>
<feature type="transmembrane region" description="Helical" evidence="1">
    <location>
        <begin position="160"/>
        <end position="180"/>
    </location>
</feature>
<feature type="transmembrane region" description="Helical" evidence="1">
    <location>
        <begin position="192"/>
        <end position="212"/>
    </location>
</feature>
<feature type="transmembrane region" description="Helical" evidence="1">
    <location>
        <begin position="224"/>
        <end position="244"/>
    </location>
</feature>
<feature type="transmembrane region" description="Helical" evidence="1">
    <location>
        <begin position="292"/>
        <end position="312"/>
    </location>
</feature>
<feature type="transmembrane region" description="Helical" evidence="1">
    <location>
        <begin position="333"/>
        <end position="353"/>
    </location>
</feature>
<feature type="transmembrane region" description="Helical" evidence="1">
    <location>
        <begin position="357"/>
        <end position="377"/>
    </location>
</feature>
<feature type="transmembrane region" description="Helical" evidence="1">
    <location>
        <begin position="384"/>
        <end position="404"/>
    </location>
</feature>
<feature type="transmembrane region" description="Helical" evidence="1">
    <location>
        <begin position="416"/>
        <end position="436"/>
    </location>
</feature>
<feature type="transmembrane region" description="Helical" evidence="1">
    <location>
        <begin position="450"/>
        <end position="470"/>
    </location>
</feature>
<protein>
    <recommendedName>
        <fullName>Uncharacterized transporter C417.10</fullName>
    </recommendedName>
</protein>